<sequence>MIGGICPTCGLPKELCICEEVAKEQQRINVKVNKRRYGKEVTVIEGLDPTDIDLEDLSKFMKGKLACGGTVKGNSIELQGNHRDRVKELLSLKGYSTENIS</sequence>
<dbReference type="EMBL" id="CP000780">
    <property type="protein sequence ID" value="ABS56417.1"/>
    <property type="molecule type" value="Genomic_DNA"/>
</dbReference>
<dbReference type="SMR" id="A7I9K6"/>
<dbReference type="STRING" id="456442.Mboo_1902"/>
<dbReference type="GeneID" id="5410859"/>
<dbReference type="KEGG" id="mbn:Mboo_1902"/>
<dbReference type="eggNOG" id="arCOG04223">
    <property type="taxonomic scope" value="Archaea"/>
</dbReference>
<dbReference type="HOGENOM" id="CLU_082805_6_1_2"/>
<dbReference type="OrthoDB" id="11182at2157"/>
<dbReference type="Proteomes" id="UP000002408">
    <property type="component" value="Chromosome"/>
</dbReference>
<dbReference type="GO" id="GO:0003729">
    <property type="term" value="F:mRNA binding"/>
    <property type="evidence" value="ECO:0007669"/>
    <property type="project" value="TreeGrafter"/>
</dbReference>
<dbReference type="GO" id="GO:0003743">
    <property type="term" value="F:translation initiation factor activity"/>
    <property type="evidence" value="ECO:0007669"/>
    <property type="project" value="InterPro"/>
</dbReference>
<dbReference type="GO" id="GO:0001731">
    <property type="term" value="P:formation of translation preinitiation complex"/>
    <property type="evidence" value="ECO:0007669"/>
    <property type="project" value="TreeGrafter"/>
</dbReference>
<dbReference type="GO" id="GO:0006417">
    <property type="term" value="P:regulation of translation"/>
    <property type="evidence" value="ECO:0007669"/>
    <property type="project" value="UniProtKB-UniRule"/>
</dbReference>
<dbReference type="GO" id="GO:0002188">
    <property type="term" value="P:translation reinitiation"/>
    <property type="evidence" value="ECO:0007669"/>
    <property type="project" value="TreeGrafter"/>
</dbReference>
<dbReference type="CDD" id="cd11567">
    <property type="entry name" value="YciH_like"/>
    <property type="match status" value="1"/>
</dbReference>
<dbReference type="FunFam" id="3.30.780.10:FF:000006">
    <property type="entry name" value="Protein translation factor SUI1 homolog"/>
    <property type="match status" value="1"/>
</dbReference>
<dbReference type="Gene3D" id="3.30.780.10">
    <property type="entry name" value="SUI1-like domain"/>
    <property type="match status" value="1"/>
</dbReference>
<dbReference type="HAMAP" id="MF_00604">
    <property type="entry name" value="SUI1"/>
    <property type="match status" value="1"/>
</dbReference>
<dbReference type="InterPro" id="IPR050318">
    <property type="entry name" value="DENR/SUI1_TIF"/>
</dbReference>
<dbReference type="InterPro" id="IPR001950">
    <property type="entry name" value="SUI1"/>
</dbReference>
<dbReference type="InterPro" id="IPR022851">
    <property type="entry name" value="SUI1_arc"/>
</dbReference>
<dbReference type="InterPro" id="IPR005872">
    <property type="entry name" value="SUI1_arc_bac"/>
</dbReference>
<dbReference type="InterPro" id="IPR036877">
    <property type="entry name" value="SUI1_dom_sf"/>
</dbReference>
<dbReference type="NCBIfam" id="NF002096">
    <property type="entry name" value="PRK00939.1"/>
    <property type="match status" value="1"/>
</dbReference>
<dbReference type="NCBIfam" id="TIGR01158">
    <property type="entry name" value="SUI1_rel"/>
    <property type="match status" value="1"/>
</dbReference>
<dbReference type="PANTHER" id="PTHR12789:SF0">
    <property type="entry name" value="DENSITY-REGULATED PROTEIN"/>
    <property type="match status" value="1"/>
</dbReference>
<dbReference type="PANTHER" id="PTHR12789">
    <property type="entry name" value="DENSITY-REGULATED PROTEIN HOMOLOG"/>
    <property type="match status" value="1"/>
</dbReference>
<dbReference type="Pfam" id="PF01253">
    <property type="entry name" value="SUI1"/>
    <property type="match status" value="1"/>
</dbReference>
<dbReference type="PIRSF" id="PIRSF037511">
    <property type="entry name" value="Transl_init_SUI1_pro"/>
    <property type="match status" value="1"/>
</dbReference>
<dbReference type="SUPFAM" id="SSF55159">
    <property type="entry name" value="eIF1-like"/>
    <property type="match status" value="1"/>
</dbReference>
<dbReference type="PROSITE" id="PS50296">
    <property type="entry name" value="SUI1"/>
    <property type="match status" value="1"/>
</dbReference>
<evidence type="ECO:0000255" key="1">
    <source>
        <dbReference type="HAMAP-Rule" id="MF_00604"/>
    </source>
</evidence>
<organism>
    <name type="scientific">Methanoregula boonei (strain DSM 21154 / JCM 14090 / 6A8)</name>
    <dbReference type="NCBI Taxonomy" id="456442"/>
    <lineage>
        <taxon>Archaea</taxon>
        <taxon>Methanobacteriati</taxon>
        <taxon>Methanobacteriota</taxon>
        <taxon>Stenosarchaea group</taxon>
        <taxon>Methanomicrobia</taxon>
        <taxon>Methanomicrobiales</taxon>
        <taxon>Methanoregulaceae</taxon>
        <taxon>Methanoregula</taxon>
    </lineage>
</organism>
<accession>A7I9K6</accession>
<comment type="similarity">
    <text evidence="1">Belongs to the SUI1 family.</text>
</comment>
<name>SUI1_METB6</name>
<feature type="chain" id="PRO_1000006430" description="Protein translation factor SUI1 homolog">
    <location>
        <begin position="1"/>
        <end position="101"/>
    </location>
</feature>
<keyword id="KW-0648">Protein biosynthesis</keyword>
<keyword id="KW-1185">Reference proteome</keyword>
<keyword id="KW-0810">Translation regulation</keyword>
<reference key="1">
    <citation type="journal article" date="2015" name="Microbiology">
        <title>Genome of Methanoregula boonei 6A8 reveals adaptations to oligotrophic peatland environments.</title>
        <authorList>
            <person name="Braeuer S."/>
            <person name="Cadillo-Quiroz H."/>
            <person name="Kyrpides N."/>
            <person name="Woyke T."/>
            <person name="Goodwin L."/>
            <person name="Detter C."/>
            <person name="Podell S."/>
            <person name="Yavitt J.B."/>
            <person name="Zinder S.H."/>
        </authorList>
    </citation>
    <scope>NUCLEOTIDE SEQUENCE [LARGE SCALE GENOMIC DNA]</scope>
    <source>
        <strain>DSM 21154 / JCM 14090 / 6A8</strain>
    </source>
</reference>
<protein>
    <recommendedName>
        <fullName evidence="1">Protein translation factor SUI1 homolog</fullName>
    </recommendedName>
</protein>
<gene>
    <name type="ordered locus">Mboo_1902</name>
</gene>
<proteinExistence type="inferred from homology"/>